<reference key="1">
    <citation type="journal article" date="1993" name="Nucleic Acids Res.">
        <title>The fission yeast rad22 gene, having a function in mating-type switching and repair of DNA damages, encodes a protein homolog to Rad52 of Saccharomyces cerevisiae.</title>
        <authorList>
            <person name="Ostermann K."/>
            <person name="Lorentz A."/>
            <person name="Schmidt H."/>
        </authorList>
    </citation>
    <scope>NUCLEOTIDE SEQUENCE [GENOMIC DNA]</scope>
    <source>
        <strain>972 / ATCC 24843</strain>
    </source>
</reference>
<reference key="2">
    <citation type="journal article" date="2002" name="Nature">
        <title>The genome sequence of Schizosaccharomyces pombe.</title>
        <authorList>
            <person name="Wood V."/>
            <person name="Gwilliam R."/>
            <person name="Rajandream M.A."/>
            <person name="Lyne M.H."/>
            <person name="Lyne R."/>
            <person name="Stewart A."/>
            <person name="Sgouros J.G."/>
            <person name="Peat N."/>
            <person name="Hayles J."/>
            <person name="Baker S.G."/>
            <person name="Basham D."/>
            <person name="Bowman S."/>
            <person name="Brooks K."/>
            <person name="Brown D."/>
            <person name="Brown S."/>
            <person name="Chillingworth T."/>
            <person name="Churcher C.M."/>
            <person name="Collins M."/>
            <person name="Connor R."/>
            <person name="Cronin A."/>
            <person name="Davis P."/>
            <person name="Feltwell T."/>
            <person name="Fraser A."/>
            <person name="Gentles S."/>
            <person name="Goble A."/>
            <person name="Hamlin N."/>
            <person name="Harris D.E."/>
            <person name="Hidalgo J."/>
            <person name="Hodgson G."/>
            <person name="Holroyd S."/>
            <person name="Hornsby T."/>
            <person name="Howarth S."/>
            <person name="Huckle E.J."/>
            <person name="Hunt S."/>
            <person name="Jagels K."/>
            <person name="James K.D."/>
            <person name="Jones L."/>
            <person name="Jones M."/>
            <person name="Leather S."/>
            <person name="McDonald S."/>
            <person name="McLean J."/>
            <person name="Mooney P."/>
            <person name="Moule S."/>
            <person name="Mungall K.L."/>
            <person name="Murphy L.D."/>
            <person name="Niblett D."/>
            <person name="Odell C."/>
            <person name="Oliver K."/>
            <person name="O'Neil S."/>
            <person name="Pearson D."/>
            <person name="Quail M.A."/>
            <person name="Rabbinowitsch E."/>
            <person name="Rutherford K.M."/>
            <person name="Rutter S."/>
            <person name="Saunders D."/>
            <person name="Seeger K."/>
            <person name="Sharp S."/>
            <person name="Skelton J."/>
            <person name="Simmonds M.N."/>
            <person name="Squares R."/>
            <person name="Squares S."/>
            <person name="Stevens K."/>
            <person name="Taylor K."/>
            <person name="Taylor R.G."/>
            <person name="Tivey A."/>
            <person name="Walsh S.V."/>
            <person name="Warren T."/>
            <person name="Whitehead S."/>
            <person name="Woodward J.R."/>
            <person name="Volckaert G."/>
            <person name="Aert R."/>
            <person name="Robben J."/>
            <person name="Grymonprez B."/>
            <person name="Weltjens I."/>
            <person name="Vanstreels E."/>
            <person name="Rieger M."/>
            <person name="Schaefer M."/>
            <person name="Mueller-Auer S."/>
            <person name="Gabel C."/>
            <person name="Fuchs M."/>
            <person name="Duesterhoeft A."/>
            <person name="Fritzc C."/>
            <person name="Holzer E."/>
            <person name="Moestl D."/>
            <person name="Hilbert H."/>
            <person name="Borzym K."/>
            <person name="Langer I."/>
            <person name="Beck A."/>
            <person name="Lehrach H."/>
            <person name="Reinhardt R."/>
            <person name="Pohl T.M."/>
            <person name="Eger P."/>
            <person name="Zimmermann W."/>
            <person name="Wedler H."/>
            <person name="Wambutt R."/>
            <person name="Purnelle B."/>
            <person name="Goffeau A."/>
            <person name="Cadieu E."/>
            <person name="Dreano S."/>
            <person name="Gloux S."/>
            <person name="Lelaure V."/>
            <person name="Mottier S."/>
            <person name="Galibert F."/>
            <person name="Aves S.J."/>
            <person name="Xiang Z."/>
            <person name="Hunt C."/>
            <person name="Moore K."/>
            <person name="Hurst S.M."/>
            <person name="Lucas M."/>
            <person name="Rochet M."/>
            <person name="Gaillardin C."/>
            <person name="Tallada V.A."/>
            <person name="Garzon A."/>
            <person name="Thode G."/>
            <person name="Daga R.R."/>
            <person name="Cruzado L."/>
            <person name="Jimenez J."/>
            <person name="Sanchez M."/>
            <person name="del Rey F."/>
            <person name="Benito J."/>
            <person name="Dominguez A."/>
            <person name="Revuelta J.L."/>
            <person name="Moreno S."/>
            <person name="Armstrong J."/>
            <person name="Forsburg S.L."/>
            <person name="Cerutti L."/>
            <person name="Lowe T."/>
            <person name="McCombie W.R."/>
            <person name="Paulsen I."/>
            <person name="Potashkin J."/>
            <person name="Shpakovski G.V."/>
            <person name="Ussery D."/>
            <person name="Barrell B.G."/>
            <person name="Nurse P."/>
        </authorList>
    </citation>
    <scope>NUCLEOTIDE SEQUENCE [LARGE SCALE GENOMIC DNA]</scope>
    <source>
        <strain>972 / ATCC 24843</strain>
    </source>
</reference>
<reference key="3">
    <citation type="journal article" date="2003" name="Mol. Biol. Cell">
        <title>Schizosaccharomyces pombe Rdh54 (TID1) acts with Rhp54 (RAD54) to repair meiotic double-strand breaks.</title>
        <authorList>
            <person name="Catlett M.G."/>
            <person name="Forsburg S.L."/>
        </authorList>
    </citation>
    <scope>INTERACTION WITH RHP51</scope>
</reference>
<reference key="4">
    <citation type="journal article" date="2008" name="J. Proteome Res.">
        <title>Phosphoproteome analysis of fission yeast.</title>
        <authorList>
            <person name="Wilson-Grady J.T."/>
            <person name="Villen J."/>
            <person name="Gygi S.P."/>
        </authorList>
    </citation>
    <scope>PHOSPHORYLATION [LARGE SCALE ANALYSIS] AT SER-296 AND SER-319</scope>
    <scope>IDENTIFICATION BY MASS SPECTROMETRY</scope>
</reference>
<protein>
    <recommendedName>
        <fullName>DNA repair and recombination protein rad22</fullName>
    </recommendedName>
</protein>
<comment type="function">
    <text>Active in the repair of DNA damage and in mating-type switching. Probably involved in the repair of DNA double-strands breaks. Has a role in promoting S phase completion.</text>
</comment>
<comment type="subunit">
    <text evidence="2">Interacts with rhp51.</text>
</comment>
<comment type="interaction">
    <interactant intactId="EBI-966242">
        <id>P36592</id>
    </interactant>
    <interactant intactId="EBI-966336">
        <id>O13351</id>
        <label>pmt3</label>
    </interactant>
    <organismsDiffer>false</organismsDiffer>
    <experiments>4</experiments>
</comment>
<comment type="interaction">
    <interactant intactId="EBI-966242">
        <id>P36592</id>
    </interactant>
    <interactant intactId="EBI-966242">
        <id>P36592</id>
        <label>rad22</label>
    </interactant>
    <organismsDiffer>false</organismsDiffer>
    <experiments>3</experiments>
</comment>
<comment type="interaction">
    <interactant intactId="EBI-966242">
        <id>P36592</id>
    </interactant>
    <interactant intactId="EBI-926960">
        <id>P36601</id>
        <label>rhp51</label>
    </interactant>
    <organismsDiffer>false</organismsDiffer>
    <experiments>5</experiments>
</comment>
<comment type="interaction">
    <interactant intactId="EBI-966242">
        <id>P36592</id>
    </interactant>
    <interactant intactId="EBI-966394">
        <id>Q92372</id>
        <label>ssb1</label>
    </interactant>
    <organismsDiffer>false</organismsDiffer>
    <experiments>2</experiments>
</comment>
<comment type="subcellular location">
    <subcellularLocation>
        <location evidence="4">Nucleus</location>
    </subcellularLocation>
</comment>
<comment type="similarity">
    <text evidence="4">Belongs to the RAD52 family.</text>
</comment>
<accession>P36592</accession>
<organism>
    <name type="scientific">Schizosaccharomyces pombe (strain 972 / ATCC 24843)</name>
    <name type="common">Fission yeast</name>
    <dbReference type="NCBI Taxonomy" id="284812"/>
    <lineage>
        <taxon>Eukaryota</taxon>
        <taxon>Fungi</taxon>
        <taxon>Dikarya</taxon>
        <taxon>Ascomycota</taxon>
        <taxon>Taphrinomycotina</taxon>
        <taxon>Schizosaccharomycetes</taxon>
        <taxon>Schizosaccharomycetales</taxon>
        <taxon>Schizosaccharomycetaceae</taxon>
        <taxon>Schizosaccharomyces</taxon>
    </lineage>
</organism>
<name>RAD22_SCHPO</name>
<gene>
    <name type="primary">rad22</name>
    <name type="ORF">SPAC30D11.10</name>
</gene>
<feature type="chain" id="PRO_0000173891" description="DNA repair and recombination protein rad22">
    <location>
        <begin position="1"/>
        <end position="469"/>
    </location>
</feature>
<feature type="region of interest" description="Disordered" evidence="1">
    <location>
        <begin position="265"/>
        <end position="296"/>
    </location>
</feature>
<feature type="region of interest" description="Disordered" evidence="1">
    <location>
        <begin position="429"/>
        <end position="469"/>
    </location>
</feature>
<feature type="compositionally biased region" description="Polar residues" evidence="1">
    <location>
        <begin position="287"/>
        <end position="296"/>
    </location>
</feature>
<feature type="compositionally biased region" description="Polar residues" evidence="1">
    <location>
        <begin position="431"/>
        <end position="452"/>
    </location>
</feature>
<feature type="compositionally biased region" description="Basic and acidic residues" evidence="1">
    <location>
        <begin position="453"/>
        <end position="469"/>
    </location>
</feature>
<feature type="modified residue" description="Phosphoserine" evidence="3">
    <location>
        <position position="296"/>
    </location>
</feature>
<feature type="modified residue" description="Phosphoserine" evidence="3">
    <location>
        <position position="319"/>
    </location>
</feature>
<feature type="sequence conflict" description="In Ref. 1; CAA51021." evidence="4" ref="1">
    <original>T</original>
    <variation>S</variation>
    <location>
        <position position="34"/>
    </location>
</feature>
<feature type="sequence conflict" description="In Ref. 1; CAA51021." evidence="4" ref="1">
    <original>D</original>
    <variation>E</variation>
    <location>
        <position position="84"/>
    </location>
</feature>
<evidence type="ECO:0000256" key="1">
    <source>
        <dbReference type="SAM" id="MobiDB-lite"/>
    </source>
</evidence>
<evidence type="ECO:0000269" key="2">
    <source>
    </source>
</evidence>
<evidence type="ECO:0000269" key="3">
    <source>
    </source>
</evidence>
<evidence type="ECO:0000305" key="4"/>
<keyword id="KW-0227">DNA damage</keyword>
<keyword id="KW-0233">DNA recombination</keyword>
<keyword id="KW-0234">DNA repair</keyword>
<keyword id="KW-0539">Nucleus</keyword>
<keyword id="KW-0597">Phosphoprotein</keyword>
<keyword id="KW-1185">Reference proteome</keyword>
<sequence>MSFEQKQHVASEDQGHFNTAYSHEEFNFLQSSLTRKLGPEYVSRRSGPGGFSVSYIESWKAIELANEIFGFNGWSSSIRSINVDFMDENKENGRISLGLSVIVRVTIKDGAYHEDIGYGSIDNCRGKASAFEKCKKEGTTDALKRALRNFGNSLGNCMYDKYYLREVGKMKPPTYHFDSGDLFRKTDPAARESFIKKQKTLNSTRTVNNQPLVNKGEQLAPRRAAELNDEQTREIEMYADEELDNIFVEDDIIAHLAVAEDTAHPAANNHHSEKAGTQINNKDKGSHNSAKPVQRSHTYPVAVPQNTSDSVGNAVTDTSPKTLFDPLKPNTGTPSPKFISARAAAAAEGVVSAPFTNNFNPRLDSPSIRKTSIIDHSKSLPVQRASVLPIIKQSSQTSPVSNNSMIRDSESIINERKENIGLIGVKRSLHDSTTSHNKSDLMRTNSDPQSAMRSRENYDATVDKKAKKG</sequence>
<proteinExistence type="evidence at protein level"/>
<dbReference type="EMBL" id="X72220">
    <property type="protein sequence ID" value="CAA51021.1"/>
    <property type="molecule type" value="Genomic_DNA"/>
</dbReference>
<dbReference type="EMBL" id="CU329670">
    <property type="protein sequence ID" value="CAA91896.1"/>
    <property type="molecule type" value="Genomic_DNA"/>
</dbReference>
<dbReference type="PIR" id="S41496">
    <property type="entry name" value="S41496"/>
</dbReference>
<dbReference type="RefSeq" id="NP_593207.1">
    <property type="nucleotide sequence ID" value="NM_001018603.2"/>
</dbReference>
<dbReference type="SMR" id="P36592"/>
<dbReference type="BioGRID" id="279519">
    <property type="interactions" value="64"/>
</dbReference>
<dbReference type="FunCoup" id="P36592">
    <property type="interactions" value="443"/>
</dbReference>
<dbReference type="IntAct" id="P36592">
    <property type="interactions" value="7"/>
</dbReference>
<dbReference type="MINT" id="P36592"/>
<dbReference type="STRING" id="284812.P36592"/>
<dbReference type="iPTMnet" id="P36592"/>
<dbReference type="PaxDb" id="4896-SPAC30D11.10.1"/>
<dbReference type="EnsemblFungi" id="SPAC30D11.10.1">
    <property type="protein sequence ID" value="SPAC30D11.10.1:pep"/>
    <property type="gene ID" value="SPAC30D11.10"/>
</dbReference>
<dbReference type="GeneID" id="2543086"/>
<dbReference type="KEGG" id="spo:2543086"/>
<dbReference type="PomBase" id="SPAC30D11.10"/>
<dbReference type="VEuPathDB" id="FungiDB:SPAC30D11.10"/>
<dbReference type="eggNOG" id="KOG4141">
    <property type="taxonomic scope" value="Eukaryota"/>
</dbReference>
<dbReference type="HOGENOM" id="CLU_011431_3_2_1"/>
<dbReference type="InParanoid" id="P36592"/>
<dbReference type="OMA" id="VSYIESW"/>
<dbReference type="PhylomeDB" id="P36592"/>
<dbReference type="PRO" id="PR:P36592"/>
<dbReference type="Proteomes" id="UP000002485">
    <property type="component" value="Chromosome I"/>
</dbReference>
<dbReference type="GO" id="GO:0000785">
    <property type="term" value="C:chromatin"/>
    <property type="evidence" value="ECO:0000314"/>
    <property type="project" value="PomBase"/>
</dbReference>
<dbReference type="GO" id="GO:0005634">
    <property type="term" value="C:nucleus"/>
    <property type="evidence" value="ECO:0000314"/>
    <property type="project" value="PomBase"/>
</dbReference>
<dbReference type="GO" id="GO:0035861">
    <property type="term" value="C:site of double-strand break"/>
    <property type="evidence" value="ECO:0000314"/>
    <property type="project" value="PomBase"/>
</dbReference>
<dbReference type="GO" id="GO:0003684">
    <property type="term" value="F:damaged DNA binding"/>
    <property type="evidence" value="ECO:0000304"/>
    <property type="project" value="PomBase"/>
</dbReference>
<dbReference type="GO" id="GO:0045027">
    <property type="term" value="F:DNA end binding"/>
    <property type="evidence" value="ECO:0000314"/>
    <property type="project" value="PomBase"/>
</dbReference>
<dbReference type="GO" id="GO:0003690">
    <property type="term" value="F:double-stranded DNA binding"/>
    <property type="evidence" value="ECO:0000314"/>
    <property type="project" value="PomBase"/>
</dbReference>
<dbReference type="GO" id="GO:0042802">
    <property type="term" value="F:identical protein binding"/>
    <property type="evidence" value="ECO:0000353"/>
    <property type="project" value="IntAct"/>
</dbReference>
<dbReference type="GO" id="GO:0030674">
    <property type="term" value="F:protein-macromolecule adaptor activity"/>
    <property type="evidence" value="ECO:0000269"/>
    <property type="project" value="PomBase"/>
</dbReference>
<dbReference type="GO" id="GO:0003697">
    <property type="term" value="F:single-stranded DNA binding"/>
    <property type="evidence" value="ECO:0000314"/>
    <property type="project" value="PomBase"/>
</dbReference>
<dbReference type="GO" id="GO:0000730">
    <property type="term" value="P:DNA recombinase assembly"/>
    <property type="evidence" value="ECO:0000303"/>
    <property type="project" value="PomBase"/>
</dbReference>
<dbReference type="GO" id="GO:0000724">
    <property type="term" value="P:double-strand break repair via homologous recombination"/>
    <property type="evidence" value="ECO:0000315"/>
    <property type="project" value="PomBase"/>
</dbReference>
<dbReference type="GO" id="GO:0045002">
    <property type="term" value="P:double-strand break repair via single-strand annealing"/>
    <property type="evidence" value="ECO:0000318"/>
    <property type="project" value="GO_Central"/>
</dbReference>
<dbReference type="GO" id="GO:0007534">
    <property type="term" value="P:gene conversion at mating-type locus"/>
    <property type="evidence" value="ECO:0000315"/>
    <property type="project" value="PomBase"/>
</dbReference>
<dbReference type="GO" id="GO:0007533">
    <property type="term" value="P:mating type switching"/>
    <property type="evidence" value="ECO:0000315"/>
    <property type="project" value="PomBase"/>
</dbReference>
<dbReference type="GO" id="GO:0006312">
    <property type="term" value="P:mitotic recombination"/>
    <property type="evidence" value="ECO:0000318"/>
    <property type="project" value="GO_Central"/>
</dbReference>
<dbReference type="GO" id="GO:1990426">
    <property type="term" value="P:mitotic recombination-dependent replication fork processing"/>
    <property type="evidence" value="ECO:0000315"/>
    <property type="project" value="PomBase"/>
</dbReference>
<dbReference type="GO" id="GO:0031297">
    <property type="term" value="P:replication fork processing"/>
    <property type="evidence" value="ECO:0000315"/>
    <property type="project" value="PomBase"/>
</dbReference>
<dbReference type="GO" id="GO:0120290">
    <property type="term" value="P:stalled replication fork localization to nuclear periphery"/>
    <property type="evidence" value="ECO:0000315"/>
    <property type="project" value="PomBase"/>
</dbReference>
<dbReference type="GO" id="GO:0000723">
    <property type="term" value="P:telomere maintenance"/>
    <property type="evidence" value="ECO:0000316"/>
    <property type="project" value="PomBase"/>
</dbReference>
<dbReference type="GO" id="GO:0000722">
    <property type="term" value="P:telomere maintenance via recombination"/>
    <property type="evidence" value="ECO:0000316"/>
    <property type="project" value="PomBase"/>
</dbReference>
<dbReference type="FunFam" id="3.30.390.80:FF:000001">
    <property type="entry name" value="DNA repair protein RAD52 homolog"/>
    <property type="match status" value="1"/>
</dbReference>
<dbReference type="Gene3D" id="3.30.390.80">
    <property type="entry name" value="DNA repair protein Rad52/59/22"/>
    <property type="match status" value="1"/>
</dbReference>
<dbReference type="InterPro" id="IPR004585">
    <property type="entry name" value="DNA_recomb/repair_Rad52"/>
</dbReference>
<dbReference type="InterPro" id="IPR041247">
    <property type="entry name" value="Rad52_fam"/>
</dbReference>
<dbReference type="InterPro" id="IPR007232">
    <property type="entry name" value="Rad52_Rad59_Rad22"/>
</dbReference>
<dbReference type="InterPro" id="IPR042525">
    <property type="entry name" value="Rad52_Rad59_Rad22_sf"/>
</dbReference>
<dbReference type="NCBIfam" id="TIGR00607">
    <property type="entry name" value="rad52"/>
    <property type="match status" value="1"/>
</dbReference>
<dbReference type="PANTHER" id="PTHR12132:SF6">
    <property type="entry name" value="DNA REPAIR AND RECOMBINATION PROTEIN RAD22"/>
    <property type="match status" value="1"/>
</dbReference>
<dbReference type="PANTHER" id="PTHR12132">
    <property type="entry name" value="DNA REPAIR AND RECOMBINATION PROTEIN RAD52, RAD59"/>
    <property type="match status" value="1"/>
</dbReference>
<dbReference type="Pfam" id="PF04098">
    <property type="entry name" value="Rad52_Rad22"/>
    <property type="match status" value="1"/>
</dbReference>
<dbReference type="SUPFAM" id="SSF54768">
    <property type="entry name" value="dsRNA-binding domain-like"/>
    <property type="match status" value="1"/>
</dbReference>